<dbReference type="EMBL" id="CP000482">
    <property type="protein sequence ID" value="ABK98336.1"/>
    <property type="molecule type" value="Genomic_DNA"/>
</dbReference>
<dbReference type="RefSeq" id="WP_011734648.1">
    <property type="nucleotide sequence ID" value="NC_008609.1"/>
</dbReference>
<dbReference type="SMR" id="A1ALW6"/>
<dbReference type="STRING" id="338966.Ppro_0705"/>
<dbReference type="KEGG" id="ppd:Ppro_0705"/>
<dbReference type="eggNOG" id="COG0522">
    <property type="taxonomic scope" value="Bacteria"/>
</dbReference>
<dbReference type="HOGENOM" id="CLU_092403_0_2_7"/>
<dbReference type="OrthoDB" id="9803672at2"/>
<dbReference type="Proteomes" id="UP000006732">
    <property type="component" value="Chromosome"/>
</dbReference>
<dbReference type="GO" id="GO:0015935">
    <property type="term" value="C:small ribosomal subunit"/>
    <property type="evidence" value="ECO:0007669"/>
    <property type="project" value="InterPro"/>
</dbReference>
<dbReference type="GO" id="GO:0019843">
    <property type="term" value="F:rRNA binding"/>
    <property type="evidence" value="ECO:0007669"/>
    <property type="project" value="UniProtKB-UniRule"/>
</dbReference>
<dbReference type="GO" id="GO:0003735">
    <property type="term" value="F:structural constituent of ribosome"/>
    <property type="evidence" value="ECO:0007669"/>
    <property type="project" value="InterPro"/>
</dbReference>
<dbReference type="GO" id="GO:0042274">
    <property type="term" value="P:ribosomal small subunit biogenesis"/>
    <property type="evidence" value="ECO:0007669"/>
    <property type="project" value="TreeGrafter"/>
</dbReference>
<dbReference type="GO" id="GO:0006412">
    <property type="term" value="P:translation"/>
    <property type="evidence" value="ECO:0007669"/>
    <property type="project" value="UniProtKB-UniRule"/>
</dbReference>
<dbReference type="CDD" id="cd00165">
    <property type="entry name" value="S4"/>
    <property type="match status" value="1"/>
</dbReference>
<dbReference type="FunFam" id="1.10.1050.10:FF:000001">
    <property type="entry name" value="30S ribosomal protein S4"/>
    <property type="match status" value="1"/>
</dbReference>
<dbReference type="FunFam" id="3.10.290.10:FF:000001">
    <property type="entry name" value="30S ribosomal protein S4"/>
    <property type="match status" value="1"/>
</dbReference>
<dbReference type="Gene3D" id="1.10.1050.10">
    <property type="entry name" value="Ribosomal Protein S4 Delta 41, Chain A, domain 1"/>
    <property type="match status" value="1"/>
</dbReference>
<dbReference type="Gene3D" id="3.10.290.10">
    <property type="entry name" value="RNA-binding S4 domain"/>
    <property type="match status" value="1"/>
</dbReference>
<dbReference type="HAMAP" id="MF_01306_B">
    <property type="entry name" value="Ribosomal_uS4_B"/>
    <property type="match status" value="1"/>
</dbReference>
<dbReference type="InterPro" id="IPR022801">
    <property type="entry name" value="Ribosomal_uS4"/>
</dbReference>
<dbReference type="InterPro" id="IPR005709">
    <property type="entry name" value="Ribosomal_uS4_bac-type"/>
</dbReference>
<dbReference type="InterPro" id="IPR018079">
    <property type="entry name" value="Ribosomal_uS4_CS"/>
</dbReference>
<dbReference type="InterPro" id="IPR001912">
    <property type="entry name" value="Ribosomal_uS4_N"/>
</dbReference>
<dbReference type="InterPro" id="IPR002942">
    <property type="entry name" value="S4_RNA-bd"/>
</dbReference>
<dbReference type="InterPro" id="IPR036986">
    <property type="entry name" value="S4_RNA-bd_sf"/>
</dbReference>
<dbReference type="NCBIfam" id="NF003717">
    <property type="entry name" value="PRK05327.1"/>
    <property type="match status" value="1"/>
</dbReference>
<dbReference type="NCBIfam" id="TIGR01017">
    <property type="entry name" value="rpsD_bact"/>
    <property type="match status" value="1"/>
</dbReference>
<dbReference type="PANTHER" id="PTHR11831">
    <property type="entry name" value="30S 40S RIBOSOMAL PROTEIN"/>
    <property type="match status" value="1"/>
</dbReference>
<dbReference type="PANTHER" id="PTHR11831:SF4">
    <property type="entry name" value="SMALL RIBOSOMAL SUBUNIT PROTEIN US4M"/>
    <property type="match status" value="1"/>
</dbReference>
<dbReference type="Pfam" id="PF00163">
    <property type="entry name" value="Ribosomal_S4"/>
    <property type="match status" value="1"/>
</dbReference>
<dbReference type="Pfam" id="PF01479">
    <property type="entry name" value="S4"/>
    <property type="match status" value="1"/>
</dbReference>
<dbReference type="SMART" id="SM01390">
    <property type="entry name" value="Ribosomal_S4"/>
    <property type="match status" value="1"/>
</dbReference>
<dbReference type="SMART" id="SM00363">
    <property type="entry name" value="S4"/>
    <property type="match status" value="1"/>
</dbReference>
<dbReference type="SUPFAM" id="SSF55174">
    <property type="entry name" value="Alpha-L RNA-binding motif"/>
    <property type="match status" value="1"/>
</dbReference>
<dbReference type="PROSITE" id="PS00632">
    <property type="entry name" value="RIBOSOMAL_S4"/>
    <property type="match status" value="1"/>
</dbReference>
<dbReference type="PROSITE" id="PS50889">
    <property type="entry name" value="S4"/>
    <property type="match status" value="1"/>
</dbReference>
<keyword id="KW-1185">Reference proteome</keyword>
<keyword id="KW-0687">Ribonucleoprotein</keyword>
<keyword id="KW-0689">Ribosomal protein</keyword>
<keyword id="KW-0694">RNA-binding</keyword>
<keyword id="KW-0699">rRNA-binding</keyword>
<protein>
    <recommendedName>
        <fullName evidence="1">Small ribosomal subunit protein uS4</fullName>
    </recommendedName>
    <alternativeName>
        <fullName evidence="2">30S ribosomal protein S4</fullName>
    </alternativeName>
</protein>
<gene>
    <name evidence="1" type="primary">rpsD</name>
    <name type="ordered locus">Ppro_0705</name>
</gene>
<comment type="function">
    <text evidence="1">One of the primary rRNA binding proteins, it binds directly to 16S rRNA where it nucleates assembly of the body of the 30S subunit.</text>
</comment>
<comment type="function">
    <text evidence="1">With S5 and S12 plays an important role in translational accuracy.</text>
</comment>
<comment type="subunit">
    <text evidence="1">Part of the 30S ribosomal subunit. Contacts protein S5. The interaction surface between S4 and S5 is involved in control of translational fidelity.</text>
</comment>
<comment type="similarity">
    <text evidence="1">Belongs to the universal ribosomal protein uS4 family.</text>
</comment>
<name>RS4_PELPD</name>
<organism>
    <name type="scientific">Pelobacter propionicus (strain DSM 2379 / NBRC 103807 / OttBd1)</name>
    <dbReference type="NCBI Taxonomy" id="338966"/>
    <lineage>
        <taxon>Bacteria</taxon>
        <taxon>Pseudomonadati</taxon>
        <taxon>Thermodesulfobacteriota</taxon>
        <taxon>Desulfuromonadia</taxon>
        <taxon>Desulfuromonadales</taxon>
        <taxon>Desulfuromonadaceae</taxon>
        <taxon>Pelobacter</taxon>
    </lineage>
</organism>
<proteinExistence type="inferred from homology"/>
<evidence type="ECO:0000255" key="1">
    <source>
        <dbReference type="HAMAP-Rule" id="MF_01306"/>
    </source>
</evidence>
<evidence type="ECO:0000305" key="2"/>
<feature type="chain" id="PRO_0000293332" description="Small ribosomal subunit protein uS4">
    <location>
        <begin position="1"/>
        <end position="208"/>
    </location>
</feature>
<feature type="domain" description="S4 RNA-binding" evidence="1">
    <location>
        <begin position="98"/>
        <end position="159"/>
    </location>
</feature>
<accession>A1ALW6</accession>
<reference key="1">
    <citation type="submission" date="2006-10" db="EMBL/GenBank/DDBJ databases">
        <title>Complete sequence of chromosome of Pelobacter propionicus DSM 2379.</title>
        <authorList>
            <consortium name="US DOE Joint Genome Institute"/>
            <person name="Copeland A."/>
            <person name="Lucas S."/>
            <person name="Lapidus A."/>
            <person name="Barry K."/>
            <person name="Detter J.C."/>
            <person name="Glavina del Rio T."/>
            <person name="Hammon N."/>
            <person name="Israni S."/>
            <person name="Dalin E."/>
            <person name="Tice H."/>
            <person name="Pitluck S."/>
            <person name="Saunders E."/>
            <person name="Brettin T."/>
            <person name="Bruce D."/>
            <person name="Han C."/>
            <person name="Tapia R."/>
            <person name="Schmutz J."/>
            <person name="Larimer F."/>
            <person name="Land M."/>
            <person name="Hauser L."/>
            <person name="Kyrpides N."/>
            <person name="Kim E."/>
            <person name="Lovley D."/>
            <person name="Richardson P."/>
        </authorList>
    </citation>
    <scope>NUCLEOTIDE SEQUENCE [LARGE SCALE GENOMIC DNA]</scope>
    <source>
        <strain>DSM 2379 / NBRC 103807 / OttBd1</strain>
    </source>
</reference>
<sequence>MARYTGPSCRLCRRENMELFLKGDRCYTDKCAIKRRNYPPGQHGQGRTKNSAYGIQLREKQKVRRIYGLMENQFRGYFAEADRMKGVTGENLLSLLERRLDNVVYRLGFASSRSESRQLVRHGHFTLNGKKVDIPSIQTRVGDVIELREKSRKIVSINDALDAVARRGIPQWLELDRDAFKGNLKALPVREDVTTPIQEQLVVELYSK</sequence>